<organism>
    <name type="scientific">Streptococcus thermophilus (strain ATCC BAA-491 / LMD-9)</name>
    <dbReference type="NCBI Taxonomy" id="322159"/>
    <lineage>
        <taxon>Bacteria</taxon>
        <taxon>Bacillati</taxon>
        <taxon>Bacillota</taxon>
        <taxon>Bacilli</taxon>
        <taxon>Lactobacillales</taxon>
        <taxon>Streptococcaceae</taxon>
        <taxon>Streptococcus</taxon>
    </lineage>
</organism>
<accession>Q03K30</accession>
<gene>
    <name evidence="1" type="primary">ldh</name>
    <name type="ordered locus">STER_1257</name>
</gene>
<proteinExistence type="inferred from homology"/>
<keyword id="KW-0021">Allosteric enzyme</keyword>
<keyword id="KW-0963">Cytoplasm</keyword>
<keyword id="KW-0520">NAD</keyword>
<keyword id="KW-0560">Oxidoreductase</keyword>
<keyword id="KW-0597">Phosphoprotein</keyword>
<dbReference type="EC" id="1.1.1.27" evidence="1"/>
<dbReference type="EMBL" id="CP000419">
    <property type="protein sequence ID" value="ABJ66442.1"/>
    <property type="molecule type" value="Genomic_DNA"/>
</dbReference>
<dbReference type="RefSeq" id="WP_011226177.1">
    <property type="nucleotide sequence ID" value="NC_008532.1"/>
</dbReference>
<dbReference type="SMR" id="Q03K30"/>
<dbReference type="KEGG" id="ste:STER_1257"/>
<dbReference type="HOGENOM" id="CLU_045401_1_1_9"/>
<dbReference type="UniPathway" id="UPA00554">
    <property type="reaction ID" value="UER00611"/>
</dbReference>
<dbReference type="GO" id="GO:0005737">
    <property type="term" value="C:cytoplasm"/>
    <property type="evidence" value="ECO:0007669"/>
    <property type="project" value="UniProtKB-SubCell"/>
</dbReference>
<dbReference type="GO" id="GO:0004459">
    <property type="term" value="F:L-lactate dehydrogenase activity"/>
    <property type="evidence" value="ECO:0007669"/>
    <property type="project" value="UniProtKB-UniRule"/>
</dbReference>
<dbReference type="GO" id="GO:0006096">
    <property type="term" value="P:glycolytic process"/>
    <property type="evidence" value="ECO:0007669"/>
    <property type="project" value="UniProtKB-UniRule"/>
</dbReference>
<dbReference type="GO" id="GO:0006089">
    <property type="term" value="P:lactate metabolic process"/>
    <property type="evidence" value="ECO:0007669"/>
    <property type="project" value="TreeGrafter"/>
</dbReference>
<dbReference type="CDD" id="cd05291">
    <property type="entry name" value="HicDH_like"/>
    <property type="match status" value="1"/>
</dbReference>
<dbReference type="FunFam" id="3.40.50.720:FF:000018">
    <property type="entry name" value="Malate dehydrogenase"/>
    <property type="match status" value="1"/>
</dbReference>
<dbReference type="Gene3D" id="3.90.110.10">
    <property type="entry name" value="Lactate dehydrogenase/glycoside hydrolase, family 4, C-terminal"/>
    <property type="match status" value="1"/>
</dbReference>
<dbReference type="Gene3D" id="3.40.50.720">
    <property type="entry name" value="NAD(P)-binding Rossmann-like Domain"/>
    <property type="match status" value="1"/>
</dbReference>
<dbReference type="HAMAP" id="MF_00488">
    <property type="entry name" value="Lactate_dehydrog"/>
    <property type="match status" value="1"/>
</dbReference>
<dbReference type="InterPro" id="IPR001557">
    <property type="entry name" value="L-lactate/malate_DH"/>
</dbReference>
<dbReference type="InterPro" id="IPR011304">
    <property type="entry name" value="L-lactate_DH"/>
</dbReference>
<dbReference type="InterPro" id="IPR018177">
    <property type="entry name" value="L-lactate_DH_AS"/>
</dbReference>
<dbReference type="InterPro" id="IPR022383">
    <property type="entry name" value="Lactate/malate_DH_C"/>
</dbReference>
<dbReference type="InterPro" id="IPR001236">
    <property type="entry name" value="Lactate/malate_DH_N"/>
</dbReference>
<dbReference type="InterPro" id="IPR015955">
    <property type="entry name" value="Lactate_DH/Glyco_Ohase_4_C"/>
</dbReference>
<dbReference type="InterPro" id="IPR036291">
    <property type="entry name" value="NAD(P)-bd_dom_sf"/>
</dbReference>
<dbReference type="NCBIfam" id="TIGR01771">
    <property type="entry name" value="L-LDH-NAD"/>
    <property type="match status" value="1"/>
</dbReference>
<dbReference type="NCBIfam" id="NF000824">
    <property type="entry name" value="PRK00066.1"/>
    <property type="match status" value="1"/>
</dbReference>
<dbReference type="PANTHER" id="PTHR43128">
    <property type="entry name" value="L-2-HYDROXYCARBOXYLATE DEHYDROGENASE (NAD(P)(+))"/>
    <property type="match status" value="1"/>
</dbReference>
<dbReference type="PANTHER" id="PTHR43128:SF16">
    <property type="entry name" value="L-LACTATE DEHYDROGENASE"/>
    <property type="match status" value="1"/>
</dbReference>
<dbReference type="Pfam" id="PF02866">
    <property type="entry name" value="Ldh_1_C"/>
    <property type="match status" value="1"/>
</dbReference>
<dbReference type="Pfam" id="PF00056">
    <property type="entry name" value="Ldh_1_N"/>
    <property type="match status" value="1"/>
</dbReference>
<dbReference type="PIRSF" id="PIRSF000102">
    <property type="entry name" value="Lac_mal_DH"/>
    <property type="match status" value="1"/>
</dbReference>
<dbReference type="PRINTS" id="PR00086">
    <property type="entry name" value="LLDHDRGNASE"/>
</dbReference>
<dbReference type="SUPFAM" id="SSF56327">
    <property type="entry name" value="LDH C-terminal domain-like"/>
    <property type="match status" value="1"/>
</dbReference>
<dbReference type="SUPFAM" id="SSF51735">
    <property type="entry name" value="NAD(P)-binding Rossmann-fold domains"/>
    <property type="match status" value="1"/>
</dbReference>
<dbReference type="PROSITE" id="PS00064">
    <property type="entry name" value="L_LDH"/>
    <property type="match status" value="1"/>
</dbReference>
<protein>
    <recommendedName>
        <fullName evidence="1">L-lactate dehydrogenase</fullName>
        <shortName evidence="1">L-LDH</shortName>
        <ecNumber evidence="1">1.1.1.27</ecNumber>
    </recommendedName>
</protein>
<reference key="1">
    <citation type="journal article" date="2006" name="Proc. Natl. Acad. Sci. U.S.A.">
        <title>Comparative genomics of the lactic acid bacteria.</title>
        <authorList>
            <person name="Makarova K.S."/>
            <person name="Slesarev A."/>
            <person name="Wolf Y.I."/>
            <person name="Sorokin A."/>
            <person name="Mirkin B."/>
            <person name="Koonin E.V."/>
            <person name="Pavlov A."/>
            <person name="Pavlova N."/>
            <person name="Karamychev V."/>
            <person name="Polouchine N."/>
            <person name="Shakhova V."/>
            <person name="Grigoriev I."/>
            <person name="Lou Y."/>
            <person name="Rohksar D."/>
            <person name="Lucas S."/>
            <person name="Huang K."/>
            <person name="Goodstein D.M."/>
            <person name="Hawkins T."/>
            <person name="Plengvidhya V."/>
            <person name="Welker D."/>
            <person name="Hughes J."/>
            <person name="Goh Y."/>
            <person name="Benson A."/>
            <person name="Baldwin K."/>
            <person name="Lee J.-H."/>
            <person name="Diaz-Muniz I."/>
            <person name="Dosti B."/>
            <person name="Smeianov V."/>
            <person name="Wechter W."/>
            <person name="Barabote R."/>
            <person name="Lorca G."/>
            <person name="Altermann E."/>
            <person name="Barrangou R."/>
            <person name="Ganesan B."/>
            <person name="Xie Y."/>
            <person name="Rawsthorne H."/>
            <person name="Tamir D."/>
            <person name="Parker C."/>
            <person name="Breidt F."/>
            <person name="Broadbent J.R."/>
            <person name="Hutkins R."/>
            <person name="O'Sullivan D."/>
            <person name="Steele J."/>
            <person name="Unlu G."/>
            <person name="Saier M.H. Jr."/>
            <person name="Klaenhammer T."/>
            <person name="Richardson P."/>
            <person name="Kozyavkin S."/>
            <person name="Weimer B.C."/>
            <person name="Mills D.A."/>
        </authorList>
    </citation>
    <scope>NUCLEOTIDE SEQUENCE [LARGE SCALE GENOMIC DNA]</scope>
    <source>
        <strain>ATCC BAA-491 / LMD-9</strain>
    </source>
</reference>
<evidence type="ECO:0000255" key="1">
    <source>
        <dbReference type="HAMAP-Rule" id="MF_00488"/>
    </source>
</evidence>
<sequence>MTATKLHKKVILVGDGAVGSSYAFALVNQGIAQELGIIEIPQLFEKAVGDALDLSHALPFTSPKKIYAAKYEDCADADLVVITAGAPQKPGETRLDLVGKNLAINKSIVTQVVESGFNGIFLVAANPVDVLTYSTWKFSGFPKERVIGSGTSLDSARFRQALAEKLNVDARSVHAYIMGEHGDSEFAVWSHANIAGVNLEEFLKDEENVQEAELVELFEGVRDAAYTIINKKGATYYGIAVALARITKAILDDENAVLPLSVFQEGQYGVNNIFIGQPAIVGAHGIVRPVNIPLNDAEQQKMKASADELQAIIDEAWKNPEFQEASKN</sequence>
<comment type="function">
    <text evidence="1">Catalyzes the conversion of lactate to pyruvate.</text>
</comment>
<comment type="catalytic activity">
    <reaction evidence="1">
        <text>(S)-lactate + NAD(+) = pyruvate + NADH + H(+)</text>
        <dbReference type="Rhea" id="RHEA:23444"/>
        <dbReference type="ChEBI" id="CHEBI:15361"/>
        <dbReference type="ChEBI" id="CHEBI:15378"/>
        <dbReference type="ChEBI" id="CHEBI:16651"/>
        <dbReference type="ChEBI" id="CHEBI:57540"/>
        <dbReference type="ChEBI" id="CHEBI:57945"/>
        <dbReference type="EC" id="1.1.1.27"/>
    </reaction>
</comment>
<comment type="activity regulation">
    <text evidence="1">Allosterically activated by fructose 1,6-bisphosphate (FBP).</text>
</comment>
<comment type="pathway">
    <text evidence="1">Fermentation; pyruvate fermentation to lactate; (S)-lactate from pyruvate: step 1/1.</text>
</comment>
<comment type="subunit">
    <text evidence="1">Homotetramer.</text>
</comment>
<comment type="subcellular location">
    <subcellularLocation>
        <location evidence="1">Cytoplasm</location>
    </subcellularLocation>
</comment>
<comment type="similarity">
    <text evidence="1">Belongs to the LDH/MDH superfamily. LDH family.</text>
</comment>
<name>LDH_STRTD</name>
<feature type="chain" id="PRO_1000026517" description="L-lactate dehydrogenase">
    <location>
        <begin position="1"/>
        <end position="328"/>
    </location>
</feature>
<feature type="active site" description="Proton acceptor" evidence="1">
    <location>
        <position position="181"/>
    </location>
</feature>
<feature type="binding site" evidence="1">
    <location>
        <position position="18"/>
    </location>
    <ligand>
        <name>NAD(+)</name>
        <dbReference type="ChEBI" id="CHEBI:57540"/>
    </ligand>
</feature>
<feature type="binding site" evidence="1">
    <location>
        <position position="39"/>
    </location>
    <ligand>
        <name>NAD(+)</name>
        <dbReference type="ChEBI" id="CHEBI:57540"/>
    </ligand>
</feature>
<feature type="binding site" evidence="1">
    <location>
        <position position="46"/>
    </location>
    <ligand>
        <name>NAD(+)</name>
        <dbReference type="ChEBI" id="CHEBI:57540"/>
    </ligand>
</feature>
<feature type="binding site" evidence="1">
    <location>
        <position position="71"/>
    </location>
    <ligand>
        <name>NAD(+)</name>
        <dbReference type="ChEBI" id="CHEBI:57540"/>
    </ligand>
</feature>
<feature type="binding site" evidence="1">
    <location>
        <begin position="85"/>
        <end position="86"/>
    </location>
    <ligand>
        <name>NAD(+)</name>
        <dbReference type="ChEBI" id="CHEBI:57540"/>
    </ligand>
</feature>
<feature type="binding site" evidence="1">
    <location>
        <position position="88"/>
    </location>
    <ligand>
        <name>substrate</name>
    </ligand>
</feature>
<feature type="binding site" evidence="1">
    <location>
        <position position="94"/>
    </location>
    <ligand>
        <name>substrate</name>
    </ligand>
</feature>
<feature type="binding site" evidence="1">
    <location>
        <position position="107"/>
    </location>
    <ligand>
        <name>NAD(+)</name>
        <dbReference type="ChEBI" id="CHEBI:57540"/>
    </ligand>
</feature>
<feature type="binding site" evidence="1">
    <location>
        <begin position="124"/>
        <end position="126"/>
    </location>
    <ligand>
        <name>NAD(+)</name>
        <dbReference type="ChEBI" id="CHEBI:57540"/>
    </ligand>
</feature>
<feature type="binding site" evidence="1">
    <location>
        <begin position="126"/>
        <end position="129"/>
    </location>
    <ligand>
        <name>substrate</name>
    </ligand>
</feature>
<feature type="binding site" evidence="1">
    <location>
        <position position="149"/>
    </location>
    <ligand>
        <name>NAD(+)</name>
        <dbReference type="ChEBI" id="CHEBI:57540"/>
    </ligand>
</feature>
<feature type="binding site" evidence="1">
    <location>
        <begin position="154"/>
        <end position="157"/>
    </location>
    <ligand>
        <name>substrate</name>
    </ligand>
</feature>
<feature type="binding site" evidence="1">
    <location>
        <position position="159"/>
    </location>
    <ligand>
        <name>beta-D-fructose 1,6-bisphosphate</name>
        <dbReference type="ChEBI" id="CHEBI:32966"/>
        <note>allosteric activator</note>
    </ligand>
</feature>
<feature type="binding site" evidence="1">
    <location>
        <position position="174"/>
    </location>
    <ligand>
        <name>beta-D-fructose 1,6-bisphosphate</name>
        <dbReference type="ChEBI" id="CHEBI:32966"/>
        <note>allosteric activator</note>
    </ligand>
</feature>
<feature type="binding site" evidence="1">
    <location>
        <position position="235"/>
    </location>
    <ligand>
        <name>substrate</name>
    </ligand>
</feature>
<feature type="modified residue" description="Phosphotyrosine" evidence="1">
    <location>
        <position position="226"/>
    </location>
</feature>